<evidence type="ECO:0000256" key="1">
    <source>
        <dbReference type="SAM" id="MobiDB-lite"/>
    </source>
</evidence>
<evidence type="ECO:0000269" key="2">
    <source>
    </source>
</evidence>
<evidence type="ECO:0000269" key="3">
    <source>
    </source>
</evidence>
<evidence type="ECO:0000269" key="4">
    <source>
    </source>
</evidence>
<evidence type="ECO:0000269" key="5">
    <source>
    </source>
</evidence>
<evidence type="ECO:0000269" key="6">
    <source>
    </source>
</evidence>
<evidence type="ECO:0000305" key="7"/>
<feature type="chain" id="PRO_0000203204" description="Protein BCH2">
    <location>
        <begin position="1"/>
        <end position="765"/>
    </location>
</feature>
<feature type="region of interest" description="Disordered" evidence="1">
    <location>
        <begin position="1"/>
        <end position="31"/>
    </location>
</feature>
<feature type="region of interest" description="CHS5-binding">
    <location>
        <begin position="735"/>
        <end position="765"/>
    </location>
</feature>
<name>BCH2_YEAST</name>
<gene>
    <name type="primary">BCH2</name>
    <name type="synonym">FMP50</name>
    <name type="ordered locus">YKR027W</name>
</gene>
<proteinExistence type="evidence at protein level"/>
<dbReference type="EMBL" id="Z28252">
    <property type="protein sequence ID" value="CAA82099.1"/>
    <property type="molecule type" value="Genomic_DNA"/>
</dbReference>
<dbReference type="EMBL" id="BK006944">
    <property type="protein sequence ID" value="DAA09182.1"/>
    <property type="molecule type" value="Genomic_DNA"/>
</dbReference>
<dbReference type="PIR" id="S38099">
    <property type="entry name" value="S38099"/>
</dbReference>
<dbReference type="RefSeq" id="NP_012952.3">
    <property type="nucleotide sequence ID" value="NM_001179817.3"/>
</dbReference>
<dbReference type="SMR" id="P36122"/>
<dbReference type="BioGRID" id="34160">
    <property type="interactions" value="190"/>
</dbReference>
<dbReference type="ComplexPortal" id="CPX-1719">
    <property type="entry name" value="Exomer complex"/>
</dbReference>
<dbReference type="FunCoup" id="P36122">
    <property type="interactions" value="100"/>
</dbReference>
<dbReference type="IntAct" id="P36122">
    <property type="interactions" value="10"/>
</dbReference>
<dbReference type="MINT" id="P36122"/>
<dbReference type="STRING" id="4932.YKR027W"/>
<dbReference type="iPTMnet" id="P36122"/>
<dbReference type="PaxDb" id="4932-YKR027W"/>
<dbReference type="PeptideAtlas" id="P36122"/>
<dbReference type="EnsemblFungi" id="YKR027W_mRNA">
    <property type="protein sequence ID" value="YKR027W"/>
    <property type="gene ID" value="YKR027W"/>
</dbReference>
<dbReference type="GeneID" id="853898"/>
<dbReference type="KEGG" id="sce:YKR027W"/>
<dbReference type="AGR" id="SGD:S000001735"/>
<dbReference type="SGD" id="S000001735">
    <property type="gene designation" value="BCH2"/>
</dbReference>
<dbReference type="VEuPathDB" id="FungiDB:YKR027W"/>
<dbReference type="eggNOG" id="ENOG502QRF3">
    <property type="taxonomic scope" value="Eukaryota"/>
</dbReference>
<dbReference type="GeneTree" id="ENSGT00940000176338"/>
<dbReference type="HOGENOM" id="CLU_019711_0_0_1"/>
<dbReference type="InParanoid" id="P36122"/>
<dbReference type="OMA" id="ETFVSCC"/>
<dbReference type="OrthoDB" id="434695at2759"/>
<dbReference type="BioCyc" id="YEAST:G3O-32003-MONOMER"/>
<dbReference type="BioGRID-ORCS" id="853898">
    <property type="hits" value="0 hits in 10 CRISPR screens"/>
</dbReference>
<dbReference type="PRO" id="PR:P36122"/>
<dbReference type="Proteomes" id="UP000002311">
    <property type="component" value="Chromosome XI"/>
</dbReference>
<dbReference type="RNAct" id="P36122">
    <property type="molecule type" value="protein"/>
</dbReference>
<dbReference type="GO" id="GO:0034044">
    <property type="term" value="C:exomer complex"/>
    <property type="evidence" value="ECO:0000314"/>
    <property type="project" value="SGD"/>
</dbReference>
<dbReference type="GO" id="GO:0016020">
    <property type="term" value="C:membrane"/>
    <property type="evidence" value="ECO:0007669"/>
    <property type="project" value="UniProtKB-KW"/>
</dbReference>
<dbReference type="GO" id="GO:0005739">
    <property type="term" value="C:mitochondrion"/>
    <property type="evidence" value="ECO:0007005"/>
    <property type="project" value="SGD"/>
</dbReference>
<dbReference type="GO" id="GO:0030140">
    <property type="term" value="C:trans-Golgi network transport vesicle"/>
    <property type="evidence" value="ECO:0000314"/>
    <property type="project" value="SGD"/>
</dbReference>
<dbReference type="GO" id="GO:0006031">
    <property type="term" value="P:chitin biosynthetic process"/>
    <property type="evidence" value="ECO:0000353"/>
    <property type="project" value="SGD"/>
</dbReference>
<dbReference type="GO" id="GO:0006893">
    <property type="term" value="P:Golgi to plasma membrane transport"/>
    <property type="evidence" value="ECO:0000316"/>
    <property type="project" value="SGD"/>
</dbReference>
<dbReference type="GO" id="GO:0015031">
    <property type="term" value="P:protein transport"/>
    <property type="evidence" value="ECO:0000303"/>
    <property type="project" value="ComplexPortal"/>
</dbReference>
<dbReference type="Gene3D" id="1.25.40.10">
    <property type="entry name" value="Tetratricopeptide repeat domain"/>
    <property type="match status" value="1"/>
</dbReference>
<dbReference type="InterPro" id="IPR015374">
    <property type="entry name" value="ChAPs"/>
</dbReference>
<dbReference type="InterPro" id="IPR011990">
    <property type="entry name" value="TPR-like_helical_dom_sf"/>
</dbReference>
<dbReference type="PANTHER" id="PTHR31975">
    <property type="entry name" value="BUD SITE SELECTION PROTEIN 7-RELATED"/>
    <property type="match status" value="1"/>
</dbReference>
<dbReference type="PANTHER" id="PTHR31975:SF2">
    <property type="entry name" value="CHITIN BIOSYNTHESIS PROTEIN CHS6-RELATED"/>
    <property type="match status" value="1"/>
</dbReference>
<dbReference type="Pfam" id="PF09295">
    <property type="entry name" value="ChAPs"/>
    <property type="match status" value="2"/>
</dbReference>
<dbReference type="SUPFAM" id="SSF48452">
    <property type="entry name" value="TPR-like"/>
    <property type="match status" value="1"/>
</dbReference>
<protein>
    <recommendedName>
        <fullName>Protein BCH2</fullName>
    </recommendedName>
    <alternativeName>
        <fullName>BUD7 and CHS6 homolog 2</fullName>
    </alternativeName>
</protein>
<accession>P36122</accession>
<accession>D6VX92</accession>
<keyword id="KW-0333">Golgi apparatus</keyword>
<keyword id="KW-0472">Membrane</keyword>
<keyword id="KW-0653">Protein transport</keyword>
<keyword id="KW-1185">Reference proteome</keyword>
<keyword id="KW-0813">Transport</keyword>
<sequence>MSFLWGSTKSKKGKNKKAAGSLPSGVVPQQRVKPTRKNVPIDYPRTLEKVHGESLIFRTSLLSELVSTGKSGIGPPDLIHCTELDKFHDEKIGEFFYITGIDASSVSMPIAFLKLIKWNDGKKLKSASLKNDDITTYCTFNIFQKLDIRLRYESEDVYQVNIVDCLNGNNEIPLSDLIWEETFVSCCIRSVIINSDFERKIPGLVELPFVFENRCASDYKRVIDSLCKFLPRFLECGWDSTKSVYATILNNYLTESLLVFLSITPEFITDYAIQVLDNLMTNDPSNSRYYAIVIISIMERSNDRDVEMIKRIHEILDLLLPVLYGLPSDEPYISDLINCITDVLSIQARFLLNNNDYELSLSISTLATNLSSDNFESWYLLSKGYIFSQQYDKALLSINSMPCLAEYDIVKQAQINAFKFYMNYYKAPLCHSREHCTMTSHELNHLMNIMHYENELELKTIIFGRTVMPNESKYGCIEEIWNKSCLELGPICGPQSDNLINFVSQQEVNTVGDMLLLKRSKETRQESWFIKQVRLLLMELVARIGWNALLQLRSDVFVMESKFKMIESSDKLSTELRQKRLCQRWFDAMFLDVYEDLSISTSSQENKATAKYSGLEWELLGLTLLRVSDLPDAVACLRTSILARFDPISCHHLLNFYLTMDFNDEFMRRFDVDIILDLLVKLISFRIRFYDRFQIFSLQVLRKLEGQLGSEIIKNKIINSPYGQAGITSVIDYMLECLSKNRNEACLAYERPLPDLPSTIKPLAD</sequence>
<comment type="function">
    <text evidence="4 5 6">Member of the CHS5-ARF1P-binding proteins (CHAPS) which mediates export of specific cargo proteins, including chitin synthase CHS3.</text>
</comment>
<comment type="subunit">
    <text evidence="4 5 6">Component of the CHS5/6 complex composed of the 4 CHAPS proteins BCH1, BCH2, BUD7, and CHS6 as well as at least CHS5 and GTP-bound ARF1. The complex interacts with the cargo protein CHS3.</text>
</comment>
<comment type="interaction">
    <interactant intactId="EBI-26374">
        <id>P36122</id>
    </interactant>
    <interactant intactId="EBI-2816">
        <id>P11076</id>
        <label>ARF1</label>
    </interactant>
    <organismsDiffer>false</organismsDiffer>
    <experiments>2</experiments>
</comment>
<comment type="interaction">
    <interactant intactId="EBI-26374">
        <id>P36122</id>
    </interactant>
    <interactant intactId="EBI-27508">
        <id>Q05029</id>
        <label>BCH1</label>
    </interactant>
    <organismsDiffer>false</organismsDiffer>
    <experiments>5</experiments>
</comment>
<comment type="interaction">
    <interactant intactId="EBI-26374">
        <id>P36122</id>
    </interactant>
    <interactant intactId="EBI-4640">
        <id>Q12114</id>
        <label>CHS5</label>
    </interactant>
    <organismsDiffer>false</organismsDiffer>
    <experiments>8</experiments>
</comment>
<comment type="interaction">
    <interactant intactId="EBI-26374">
        <id>P36122</id>
    </interactant>
    <interactant intactId="EBI-18140">
        <id>P40073</id>
        <label>SHO1</label>
    </interactant>
    <organismsDiffer>false</organismsDiffer>
    <experiments>2</experiments>
</comment>
<comment type="subcellular location">
    <subcellularLocation>
        <location evidence="2 4 6">Golgi apparatus</location>
        <location evidence="2 4 6">trans-Golgi network membrane</location>
        <topology evidence="2 4 6">Peripheral membrane protein</topology>
    </subcellularLocation>
    <text>Trans-Golgi network location requires interaction with CHS5 and with myristoylated GTP-bound ARF1 for the recruitment to the membranes.</text>
</comment>
<comment type="miscellaneous">
    <text evidence="3">Present with 2540 molecules/cell in log phase SD medium.</text>
</comment>
<comment type="similarity">
    <text evidence="7">Belongs to the CHAPS family.</text>
</comment>
<organism>
    <name type="scientific">Saccharomyces cerevisiae (strain ATCC 204508 / S288c)</name>
    <name type="common">Baker's yeast</name>
    <dbReference type="NCBI Taxonomy" id="559292"/>
    <lineage>
        <taxon>Eukaryota</taxon>
        <taxon>Fungi</taxon>
        <taxon>Dikarya</taxon>
        <taxon>Ascomycota</taxon>
        <taxon>Saccharomycotina</taxon>
        <taxon>Saccharomycetes</taxon>
        <taxon>Saccharomycetales</taxon>
        <taxon>Saccharomycetaceae</taxon>
        <taxon>Saccharomyces</taxon>
    </lineage>
</organism>
<reference key="1">
    <citation type="journal article" date="1994" name="Nature">
        <title>Complete DNA sequence of yeast chromosome XI.</title>
        <authorList>
            <person name="Dujon B."/>
            <person name="Alexandraki D."/>
            <person name="Andre B."/>
            <person name="Ansorge W."/>
            <person name="Baladron V."/>
            <person name="Ballesta J.P.G."/>
            <person name="Banrevi A."/>
            <person name="Bolle P.-A."/>
            <person name="Bolotin-Fukuhara M."/>
            <person name="Bossier P."/>
            <person name="Bou G."/>
            <person name="Boyer J."/>
            <person name="Buitrago M.J."/>
            <person name="Cheret G."/>
            <person name="Colleaux L."/>
            <person name="Daignan-Fornier B."/>
            <person name="del Rey F."/>
            <person name="Dion C."/>
            <person name="Domdey H."/>
            <person name="Duesterhoeft A."/>
            <person name="Duesterhus S."/>
            <person name="Entian K.-D."/>
            <person name="Erfle H."/>
            <person name="Esteban P.F."/>
            <person name="Feldmann H."/>
            <person name="Fernandes L."/>
            <person name="Fobo G.M."/>
            <person name="Fritz C."/>
            <person name="Fukuhara H."/>
            <person name="Gabel C."/>
            <person name="Gaillon L."/>
            <person name="Garcia-Cantalejo J.M."/>
            <person name="Garcia-Ramirez J.J."/>
            <person name="Gent M.E."/>
            <person name="Ghazvini M."/>
            <person name="Goffeau A."/>
            <person name="Gonzalez A."/>
            <person name="Grothues D."/>
            <person name="Guerreiro P."/>
            <person name="Hegemann J.H."/>
            <person name="Hewitt N."/>
            <person name="Hilger F."/>
            <person name="Hollenberg C.P."/>
            <person name="Horaitis O."/>
            <person name="Indge K.J."/>
            <person name="Jacquier A."/>
            <person name="James C.M."/>
            <person name="Jauniaux J.-C."/>
            <person name="Jimenez A."/>
            <person name="Keuchel H."/>
            <person name="Kirchrath L."/>
            <person name="Kleine K."/>
            <person name="Koetter P."/>
            <person name="Legrain P."/>
            <person name="Liebl S."/>
            <person name="Louis E.J."/>
            <person name="Maia e Silva A."/>
            <person name="Marck C."/>
            <person name="Monnier A.-L."/>
            <person name="Moestl D."/>
            <person name="Mueller S."/>
            <person name="Obermaier B."/>
            <person name="Oliver S.G."/>
            <person name="Pallier C."/>
            <person name="Pascolo S."/>
            <person name="Pfeiffer F."/>
            <person name="Philippsen P."/>
            <person name="Planta R.J."/>
            <person name="Pohl F.M."/>
            <person name="Pohl T.M."/>
            <person name="Poehlmann R."/>
            <person name="Portetelle D."/>
            <person name="Purnelle B."/>
            <person name="Puzos V."/>
            <person name="Ramezani Rad M."/>
            <person name="Rasmussen S.W."/>
            <person name="Remacha M.A."/>
            <person name="Revuelta J.L."/>
            <person name="Richard G.-F."/>
            <person name="Rieger M."/>
            <person name="Rodrigues-Pousada C."/>
            <person name="Rose M."/>
            <person name="Rupp T."/>
            <person name="Santos M.A."/>
            <person name="Schwager C."/>
            <person name="Sensen C."/>
            <person name="Skala J."/>
            <person name="Soares H."/>
            <person name="Sor F."/>
            <person name="Stegemann J."/>
            <person name="Tettelin H."/>
            <person name="Thierry A."/>
            <person name="Tzermia M."/>
            <person name="Urrestarazu L.A."/>
            <person name="van Dyck L."/>
            <person name="van Vliet-Reedijk J.C."/>
            <person name="Valens M."/>
            <person name="Vandenbol M."/>
            <person name="Vilela C."/>
            <person name="Vissers S."/>
            <person name="von Wettstein D."/>
            <person name="Voss H."/>
            <person name="Wiemann S."/>
            <person name="Xu G."/>
            <person name="Zimmermann J."/>
            <person name="Haasemann M."/>
            <person name="Becker I."/>
            <person name="Mewes H.-W."/>
        </authorList>
    </citation>
    <scope>NUCLEOTIDE SEQUENCE [LARGE SCALE GENOMIC DNA]</scope>
    <source>
        <strain>ATCC 204508 / S288c</strain>
    </source>
</reference>
<reference key="2">
    <citation type="journal article" date="2014" name="G3 (Bethesda)">
        <title>The reference genome sequence of Saccharomyces cerevisiae: Then and now.</title>
        <authorList>
            <person name="Engel S.R."/>
            <person name="Dietrich F.S."/>
            <person name="Fisk D.G."/>
            <person name="Binkley G."/>
            <person name="Balakrishnan R."/>
            <person name="Costanzo M.C."/>
            <person name="Dwight S.S."/>
            <person name="Hitz B.C."/>
            <person name="Karra K."/>
            <person name="Nash R.S."/>
            <person name="Weng S."/>
            <person name="Wong E.D."/>
            <person name="Lloyd P."/>
            <person name="Skrzypek M.S."/>
            <person name="Miyasato S.R."/>
            <person name="Simison M."/>
            <person name="Cherry J.M."/>
        </authorList>
    </citation>
    <scope>GENOME REANNOTATION</scope>
    <source>
        <strain>ATCC 204508 / S288c</strain>
    </source>
</reference>
<reference key="3">
    <citation type="journal article" date="2003" name="Nature">
        <title>Global analysis of protein localization in budding yeast.</title>
        <authorList>
            <person name="Huh W.-K."/>
            <person name="Falvo J.V."/>
            <person name="Gerke L.C."/>
            <person name="Carroll A.S."/>
            <person name="Howson R.W."/>
            <person name="Weissman J.S."/>
            <person name="O'Shea E.K."/>
        </authorList>
    </citation>
    <scope>SUBCELLULAR LOCATION [LARGE SCALE ANALYSIS]</scope>
</reference>
<reference key="4">
    <citation type="journal article" date="2003" name="Nature">
        <title>Global analysis of protein expression in yeast.</title>
        <authorList>
            <person name="Ghaemmaghami S."/>
            <person name="Huh W.-K."/>
            <person name="Bower K."/>
            <person name="Howson R.W."/>
            <person name="Belle A."/>
            <person name="Dephoure N."/>
            <person name="O'Shea E.K."/>
            <person name="Weissman J.S."/>
        </authorList>
    </citation>
    <scope>LEVEL OF PROTEIN EXPRESSION [LARGE SCALE ANALYSIS]</scope>
</reference>
<reference key="5">
    <citation type="journal article" date="2006" name="EMBO J.">
        <title>Arf1p, Chs5p and the ChAPs are required for export of specialized cargo from the Golgi.</title>
        <authorList>
            <person name="Trautwein M."/>
            <person name="Schindler C."/>
            <person name="Gauss R."/>
            <person name="Dengjel J."/>
            <person name="Hartmann E."/>
            <person name="Spang A."/>
        </authorList>
    </citation>
    <scope>FUNCTION</scope>
    <scope>SUBCELLULAR LOCATION</scope>
    <scope>INTERACTION WITH ARF1; BCH1; BUD7; CHS3; CHS5 AND CHS6</scope>
    <scope>DOMAIN</scope>
</reference>
<reference key="6">
    <citation type="journal article" date="2006" name="J. Cell Biol.">
        <title>Exomer: a coat complex for transport of select membrane proteins from the trans-Golgi network to the plasma membrane in yeast.</title>
        <authorList>
            <person name="Wang C.-W."/>
            <person name="Hamamoto S."/>
            <person name="Orci L."/>
            <person name="Schekman R."/>
        </authorList>
    </citation>
    <scope>FUNCTION</scope>
    <scope>IDENTIFICATION IN THE CHS5/6 COMPLEX</scope>
    <scope>INTERACTION WITH ARF1</scope>
    <scope>SUBCELLULAR LOCATION</scope>
</reference>
<reference key="7">
    <citation type="journal article" date="2006" name="Mol. Biol. Cell">
        <title>Chs5/6 complex: a multiprotein complex that interacts with and conveys chitin synthase III from the trans-Golgi network to the cell surface.</title>
        <authorList>
            <person name="Sanchatjate S."/>
            <person name="Schekman R."/>
        </authorList>
    </citation>
    <scope>FUNCTION</scope>
    <scope>IDENTIFICATION IN THE CHS5/6 COMPLEX</scope>
    <scope>INTERACTION WITH CHS3</scope>
</reference>
<reference key="8">
    <citation type="journal article" date="2008" name="Mol. Cell. Proteomics">
        <title>A multidimensional chromatography technology for in-depth phosphoproteome analysis.</title>
        <authorList>
            <person name="Albuquerque C.P."/>
            <person name="Smolka M.B."/>
            <person name="Payne S.H."/>
            <person name="Bafna V."/>
            <person name="Eng J."/>
            <person name="Zhou H."/>
        </authorList>
    </citation>
    <scope>IDENTIFICATION BY MASS SPECTROMETRY [LARGE SCALE ANALYSIS]</scope>
</reference>